<accession>Q1BAH2</accession>
<sequence>MSEPNSDHGAGAAVGETRPLYSRVLLKLGGEMFGGGAVGLDPDVVHLVARQIAEVVRSGVQVAVVIGGGNFFRGAQLQQRGMERTRSDYMGMLGTVMNSLALQDFLEKEGIDTRVQTAITMGQVAEPYIPLRAVRHLEKGRVVIFGAGMGLPYFSTDTTAAQRALEIGAEVVLMAKAVDGVYTADPRKDPDAQLLTAITHREVIDRGLAVADATAFSLCMDNGMPILVFNLLVDGNIARAVAGEKIGTLVTT</sequence>
<evidence type="ECO:0000255" key="1">
    <source>
        <dbReference type="HAMAP-Rule" id="MF_01220"/>
    </source>
</evidence>
<comment type="function">
    <text evidence="1">Catalyzes the reversible phosphorylation of UMP to UDP.</text>
</comment>
<comment type="catalytic activity">
    <reaction evidence="1">
        <text>UMP + ATP = UDP + ADP</text>
        <dbReference type="Rhea" id="RHEA:24400"/>
        <dbReference type="ChEBI" id="CHEBI:30616"/>
        <dbReference type="ChEBI" id="CHEBI:57865"/>
        <dbReference type="ChEBI" id="CHEBI:58223"/>
        <dbReference type="ChEBI" id="CHEBI:456216"/>
        <dbReference type="EC" id="2.7.4.22"/>
    </reaction>
</comment>
<comment type="activity regulation">
    <text evidence="1">Inhibited by UTP.</text>
</comment>
<comment type="pathway">
    <text evidence="1">Pyrimidine metabolism; CTP biosynthesis via de novo pathway; UDP from UMP (UMPK route): step 1/1.</text>
</comment>
<comment type="subunit">
    <text evidence="1">Homohexamer.</text>
</comment>
<comment type="subcellular location">
    <subcellularLocation>
        <location evidence="1">Cytoplasm</location>
    </subcellularLocation>
</comment>
<comment type="similarity">
    <text evidence="1">Belongs to the UMP kinase family.</text>
</comment>
<feature type="chain" id="PRO_0000323890" description="Uridylate kinase">
    <location>
        <begin position="1"/>
        <end position="252"/>
    </location>
</feature>
<feature type="binding site" evidence="1">
    <location>
        <begin position="27"/>
        <end position="30"/>
    </location>
    <ligand>
        <name>ATP</name>
        <dbReference type="ChEBI" id="CHEBI:30616"/>
    </ligand>
</feature>
<feature type="binding site" evidence="1">
    <location>
        <position position="68"/>
    </location>
    <ligand>
        <name>UMP</name>
        <dbReference type="ChEBI" id="CHEBI:57865"/>
    </ligand>
</feature>
<feature type="binding site" evidence="1">
    <location>
        <position position="69"/>
    </location>
    <ligand>
        <name>ATP</name>
        <dbReference type="ChEBI" id="CHEBI:30616"/>
    </ligand>
</feature>
<feature type="binding site" evidence="1">
    <location>
        <position position="73"/>
    </location>
    <ligand>
        <name>ATP</name>
        <dbReference type="ChEBI" id="CHEBI:30616"/>
    </ligand>
</feature>
<feature type="binding site" evidence="1">
    <location>
        <position position="88"/>
    </location>
    <ligand>
        <name>UMP</name>
        <dbReference type="ChEBI" id="CHEBI:57865"/>
    </ligand>
</feature>
<feature type="binding site" evidence="1">
    <location>
        <begin position="149"/>
        <end position="156"/>
    </location>
    <ligand>
        <name>UMP</name>
        <dbReference type="ChEBI" id="CHEBI:57865"/>
    </ligand>
</feature>
<feature type="binding site" evidence="1">
    <location>
        <position position="182"/>
    </location>
    <ligand>
        <name>ATP</name>
        <dbReference type="ChEBI" id="CHEBI:30616"/>
    </ligand>
</feature>
<feature type="binding site" evidence="1">
    <location>
        <position position="185"/>
    </location>
    <ligand>
        <name>ATP</name>
        <dbReference type="ChEBI" id="CHEBI:30616"/>
    </ligand>
</feature>
<keyword id="KW-0067">ATP-binding</keyword>
<keyword id="KW-0963">Cytoplasm</keyword>
<keyword id="KW-0418">Kinase</keyword>
<keyword id="KW-0547">Nucleotide-binding</keyword>
<keyword id="KW-0665">Pyrimidine biosynthesis</keyword>
<keyword id="KW-0808">Transferase</keyword>
<protein>
    <recommendedName>
        <fullName evidence="1">Uridylate kinase</fullName>
        <shortName evidence="1">UK</shortName>
        <ecNumber evidence="1">2.7.4.22</ecNumber>
    </recommendedName>
    <alternativeName>
        <fullName evidence="1">Uridine monophosphate kinase</fullName>
        <shortName evidence="1">UMP kinase</shortName>
        <shortName evidence="1">UMPK</shortName>
    </alternativeName>
</protein>
<proteinExistence type="inferred from homology"/>
<dbReference type="EC" id="2.7.4.22" evidence="1"/>
<dbReference type="EMBL" id="CP000384">
    <property type="protein sequence ID" value="ABG08112.1"/>
    <property type="molecule type" value="Genomic_DNA"/>
</dbReference>
<dbReference type="SMR" id="Q1BAH2"/>
<dbReference type="KEGG" id="mmc:Mmcs_2003"/>
<dbReference type="HOGENOM" id="CLU_033861_0_0_11"/>
<dbReference type="BioCyc" id="MSP164756:G1G6O-2049-MONOMER"/>
<dbReference type="UniPathway" id="UPA00159">
    <property type="reaction ID" value="UER00275"/>
</dbReference>
<dbReference type="GO" id="GO:0005737">
    <property type="term" value="C:cytoplasm"/>
    <property type="evidence" value="ECO:0007669"/>
    <property type="project" value="UniProtKB-SubCell"/>
</dbReference>
<dbReference type="GO" id="GO:0005524">
    <property type="term" value="F:ATP binding"/>
    <property type="evidence" value="ECO:0007669"/>
    <property type="project" value="UniProtKB-KW"/>
</dbReference>
<dbReference type="GO" id="GO:0033862">
    <property type="term" value="F:UMP kinase activity"/>
    <property type="evidence" value="ECO:0007669"/>
    <property type="project" value="UniProtKB-EC"/>
</dbReference>
<dbReference type="GO" id="GO:0044210">
    <property type="term" value="P:'de novo' CTP biosynthetic process"/>
    <property type="evidence" value="ECO:0007669"/>
    <property type="project" value="UniProtKB-UniRule"/>
</dbReference>
<dbReference type="GO" id="GO:0006225">
    <property type="term" value="P:UDP biosynthetic process"/>
    <property type="evidence" value="ECO:0007669"/>
    <property type="project" value="TreeGrafter"/>
</dbReference>
<dbReference type="CDD" id="cd04254">
    <property type="entry name" value="AAK_UMPK-PyrH-Ec"/>
    <property type="match status" value="1"/>
</dbReference>
<dbReference type="FunFam" id="3.40.1160.10:FF:000001">
    <property type="entry name" value="Uridylate kinase"/>
    <property type="match status" value="1"/>
</dbReference>
<dbReference type="Gene3D" id="3.40.1160.10">
    <property type="entry name" value="Acetylglutamate kinase-like"/>
    <property type="match status" value="1"/>
</dbReference>
<dbReference type="HAMAP" id="MF_01220_B">
    <property type="entry name" value="PyrH_B"/>
    <property type="match status" value="1"/>
</dbReference>
<dbReference type="InterPro" id="IPR036393">
    <property type="entry name" value="AceGlu_kinase-like_sf"/>
</dbReference>
<dbReference type="InterPro" id="IPR001048">
    <property type="entry name" value="Asp/Glu/Uridylate_kinase"/>
</dbReference>
<dbReference type="InterPro" id="IPR011817">
    <property type="entry name" value="Uridylate_kinase"/>
</dbReference>
<dbReference type="InterPro" id="IPR015963">
    <property type="entry name" value="Uridylate_kinase_bac"/>
</dbReference>
<dbReference type="NCBIfam" id="TIGR02075">
    <property type="entry name" value="pyrH_bact"/>
    <property type="match status" value="1"/>
</dbReference>
<dbReference type="PANTHER" id="PTHR42833">
    <property type="entry name" value="URIDYLATE KINASE"/>
    <property type="match status" value="1"/>
</dbReference>
<dbReference type="PANTHER" id="PTHR42833:SF4">
    <property type="entry name" value="URIDYLATE KINASE PUMPKIN, CHLOROPLASTIC"/>
    <property type="match status" value="1"/>
</dbReference>
<dbReference type="Pfam" id="PF00696">
    <property type="entry name" value="AA_kinase"/>
    <property type="match status" value="1"/>
</dbReference>
<dbReference type="PIRSF" id="PIRSF005650">
    <property type="entry name" value="Uridylate_kin"/>
    <property type="match status" value="1"/>
</dbReference>
<dbReference type="SUPFAM" id="SSF53633">
    <property type="entry name" value="Carbamate kinase-like"/>
    <property type="match status" value="1"/>
</dbReference>
<name>PYRH_MYCSS</name>
<organism>
    <name type="scientific">Mycobacterium sp. (strain MCS)</name>
    <dbReference type="NCBI Taxonomy" id="164756"/>
    <lineage>
        <taxon>Bacteria</taxon>
        <taxon>Bacillati</taxon>
        <taxon>Actinomycetota</taxon>
        <taxon>Actinomycetes</taxon>
        <taxon>Mycobacteriales</taxon>
        <taxon>Mycobacteriaceae</taxon>
        <taxon>Mycobacterium</taxon>
    </lineage>
</organism>
<gene>
    <name evidence="1" type="primary">pyrH</name>
    <name type="ordered locus">Mmcs_2003</name>
</gene>
<reference key="1">
    <citation type="submission" date="2006-06" db="EMBL/GenBank/DDBJ databases">
        <title>Complete sequence of chromosome of Mycobacterium sp. MCS.</title>
        <authorList>
            <consortium name="US DOE Joint Genome Institute"/>
            <person name="Copeland A."/>
            <person name="Lucas S."/>
            <person name="Lapidus A."/>
            <person name="Barry K."/>
            <person name="Detter J.C."/>
            <person name="Glavina del Rio T."/>
            <person name="Hammon N."/>
            <person name="Israni S."/>
            <person name="Dalin E."/>
            <person name="Tice H."/>
            <person name="Pitluck S."/>
            <person name="Martinez M."/>
            <person name="Schmutz J."/>
            <person name="Larimer F."/>
            <person name="Land M."/>
            <person name="Hauser L."/>
            <person name="Kyrpides N."/>
            <person name="Kim E."/>
            <person name="Miller C.D."/>
            <person name="Hughes J.E."/>
            <person name="Anderson A.J."/>
            <person name="Sims R.C."/>
            <person name="Richardson P."/>
        </authorList>
    </citation>
    <scope>NUCLEOTIDE SEQUENCE [LARGE SCALE GENOMIC DNA]</scope>
    <source>
        <strain>MCS</strain>
    </source>
</reference>